<sequence length="219" mass="23738">MSPQDKLVIALPKGRILDEAMPLVRAAGILPEPAFDDPKSRLLRFGTNHPHIDIIRVRSFDVATFVAFGAAHLGVAGNDVLMEFDYPEIYAPLDLGIGACRLSVAEPDDLAASDDPRRWSHVRIATKYPEVTKRHFAARGVQAECVKLNGAMELAPSLGLCTRIVDLVSSGATLKANGLKEVEVLAEVTSRLIVNRAALKTRPDEMAGWIEAFRKACGG</sequence>
<comment type="function">
    <text evidence="1">Catalyzes the condensation of ATP and 5-phosphoribose 1-diphosphate to form N'-(5'-phosphoribosyl)-ATP (PR-ATP). Has a crucial role in the pathway because the rate of histidine biosynthesis seems to be controlled primarily by regulation of HisG enzymatic activity.</text>
</comment>
<comment type="catalytic activity">
    <reaction evidence="1">
        <text>1-(5-phospho-beta-D-ribosyl)-ATP + diphosphate = 5-phospho-alpha-D-ribose 1-diphosphate + ATP</text>
        <dbReference type="Rhea" id="RHEA:18473"/>
        <dbReference type="ChEBI" id="CHEBI:30616"/>
        <dbReference type="ChEBI" id="CHEBI:33019"/>
        <dbReference type="ChEBI" id="CHEBI:58017"/>
        <dbReference type="ChEBI" id="CHEBI:73183"/>
        <dbReference type="EC" id="2.4.2.17"/>
    </reaction>
</comment>
<comment type="pathway">
    <text evidence="1">Amino-acid biosynthesis; L-histidine biosynthesis; L-histidine from 5-phospho-alpha-D-ribose 1-diphosphate: step 1/9.</text>
</comment>
<comment type="subunit">
    <text evidence="1">Heteromultimer composed of HisG and HisZ subunits.</text>
</comment>
<comment type="subcellular location">
    <subcellularLocation>
        <location evidence="1">Cytoplasm</location>
    </subcellularLocation>
</comment>
<comment type="domain">
    <text>Lacks the C-terminal regulatory region which is replaced by HisZ.</text>
</comment>
<comment type="similarity">
    <text evidence="1">Belongs to the ATP phosphoribosyltransferase family. Short subfamily.</text>
</comment>
<dbReference type="EC" id="2.4.2.17" evidence="1"/>
<dbReference type="EMBL" id="AP007255">
    <property type="protein sequence ID" value="BAE52147.1"/>
    <property type="molecule type" value="Genomic_DNA"/>
</dbReference>
<dbReference type="SMR" id="Q2W1X8"/>
<dbReference type="STRING" id="342108.amb3343"/>
<dbReference type="KEGG" id="mag:amb3343"/>
<dbReference type="HOGENOM" id="CLU_038115_2_0_5"/>
<dbReference type="OrthoDB" id="9806435at2"/>
<dbReference type="UniPathway" id="UPA00031">
    <property type="reaction ID" value="UER00006"/>
</dbReference>
<dbReference type="Proteomes" id="UP000007058">
    <property type="component" value="Chromosome"/>
</dbReference>
<dbReference type="GO" id="GO:0005737">
    <property type="term" value="C:cytoplasm"/>
    <property type="evidence" value="ECO:0007669"/>
    <property type="project" value="UniProtKB-SubCell"/>
</dbReference>
<dbReference type="GO" id="GO:0005524">
    <property type="term" value="F:ATP binding"/>
    <property type="evidence" value="ECO:0007669"/>
    <property type="project" value="UniProtKB-KW"/>
</dbReference>
<dbReference type="GO" id="GO:0003879">
    <property type="term" value="F:ATP phosphoribosyltransferase activity"/>
    <property type="evidence" value="ECO:0007669"/>
    <property type="project" value="UniProtKB-UniRule"/>
</dbReference>
<dbReference type="GO" id="GO:0000105">
    <property type="term" value="P:L-histidine biosynthetic process"/>
    <property type="evidence" value="ECO:0007669"/>
    <property type="project" value="UniProtKB-UniRule"/>
</dbReference>
<dbReference type="CDD" id="cd13595">
    <property type="entry name" value="PBP2_HisGs"/>
    <property type="match status" value="1"/>
</dbReference>
<dbReference type="FunFam" id="3.40.190.10:FF:000008">
    <property type="entry name" value="ATP phosphoribosyltransferase"/>
    <property type="match status" value="1"/>
</dbReference>
<dbReference type="Gene3D" id="3.40.190.10">
    <property type="entry name" value="Periplasmic binding protein-like II"/>
    <property type="match status" value="2"/>
</dbReference>
<dbReference type="HAMAP" id="MF_01018">
    <property type="entry name" value="HisG_Short"/>
    <property type="match status" value="1"/>
</dbReference>
<dbReference type="InterPro" id="IPR013820">
    <property type="entry name" value="ATP_PRibTrfase_cat"/>
</dbReference>
<dbReference type="InterPro" id="IPR001348">
    <property type="entry name" value="ATP_PRibTrfase_HisG"/>
</dbReference>
<dbReference type="InterPro" id="IPR024893">
    <property type="entry name" value="ATP_PRibTrfase_HisG_short"/>
</dbReference>
<dbReference type="NCBIfam" id="TIGR00070">
    <property type="entry name" value="hisG"/>
    <property type="match status" value="1"/>
</dbReference>
<dbReference type="PANTHER" id="PTHR21403:SF8">
    <property type="entry name" value="ATP PHOSPHORIBOSYLTRANSFERASE"/>
    <property type="match status" value="1"/>
</dbReference>
<dbReference type="PANTHER" id="PTHR21403">
    <property type="entry name" value="ATP PHOSPHORIBOSYLTRANSFERASE ATP-PRTASE"/>
    <property type="match status" value="1"/>
</dbReference>
<dbReference type="Pfam" id="PF01634">
    <property type="entry name" value="HisG"/>
    <property type="match status" value="1"/>
</dbReference>
<dbReference type="SUPFAM" id="SSF53850">
    <property type="entry name" value="Periplasmic binding protein-like II"/>
    <property type="match status" value="1"/>
</dbReference>
<feature type="chain" id="PRO_0000319526" description="ATP phosphoribosyltransferase">
    <location>
        <begin position="1"/>
        <end position="219"/>
    </location>
</feature>
<protein>
    <recommendedName>
        <fullName evidence="1">ATP phosphoribosyltransferase</fullName>
        <shortName evidence="1">ATP-PRT</shortName>
        <shortName evidence="1">ATP-PRTase</shortName>
        <ecNumber evidence="1">2.4.2.17</ecNumber>
    </recommendedName>
</protein>
<name>HIS1_PARM1</name>
<gene>
    <name evidence="1" type="primary">hisG</name>
    <name type="ordered locus">amb3343</name>
</gene>
<keyword id="KW-0028">Amino-acid biosynthesis</keyword>
<keyword id="KW-0067">ATP-binding</keyword>
<keyword id="KW-0963">Cytoplasm</keyword>
<keyword id="KW-0328">Glycosyltransferase</keyword>
<keyword id="KW-0368">Histidine biosynthesis</keyword>
<keyword id="KW-0547">Nucleotide-binding</keyword>
<keyword id="KW-0808">Transferase</keyword>
<reference key="1">
    <citation type="journal article" date="2005" name="DNA Res.">
        <title>Complete genome sequence of the facultative anaerobic magnetotactic bacterium Magnetospirillum sp. strain AMB-1.</title>
        <authorList>
            <person name="Matsunaga T."/>
            <person name="Okamura Y."/>
            <person name="Fukuda Y."/>
            <person name="Wahyudi A.T."/>
            <person name="Murase Y."/>
            <person name="Takeyama H."/>
        </authorList>
    </citation>
    <scope>NUCLEOTIDE SEQUENCE [LARGE SCALE GENOMIC DNA]</scope>
    <source>
        <strain>ATCC 700264 / AMB-1</strain>
    </source>
</reference>
<organism>
    <name type="scientific">Paramagnetospirillum magneticum (strain ATCC 700264 / AMB-1)</name>
    <name type="common">Magnetospirillum magneticum</name>
    <dbReference type="NCBI Taxonomy" id="342108"/>
    <lineage>
        <taxon>Bacteria</taxon>
        <taxon>Pseudomonadati</taxon>
        <taxon>Pseudomonadota</taxon>
        <taxon>Alphaproteobacteria</taxon>
        <taxon>Rhodospirillales</taxon>
        <taxon>Magnetospirillaceae</taxon>
        <taxon>Paramagnetospirillum</taxon>
    </lineage>
</organism>
<proteinExistence type="inferred from homology"/>
<accession>Q2W1X8</accession>
<evidence type="ECO:0000255" key="1">
    <source>
        <dbReference type="HAMAP-Rule" id="MF_01018"/>
    </source>
</evidence>